<feature type="chain" id="PRO_0000225121" description="Crossover junction endodeoxyribonuclease RuvC">
    <location>
        <begin position="1"/>
        <end position="169"/>
    </location>
</feature>
<feature type="active site" evidence="1">
    <location>
        <position position="11"/>
    </location>
</feature>
<feature type="active site" evidence="1">
    <location>
        <position position="71"/>
    </location>
</feature>
<feature type="active site" evidence="1">
    <location>
        <position position="143"/>
    </location>
</feature>
<feature type="binding site" evidence="1">
    <location>
        <position position="11"/>
    </location>
    <ligand>
        <name>Mg(2+)</name>
        <dbReference type="ChEBI" id="CHEBI:18420"/>
        <label>1</label>
    </ligand>
</feature>
<feature type="binding site" evidence="1">
    <location>
        <position position="71"/>
    </location>
    <ligand>
        <name>Mg(2+)</name>
        <dbReference type="ChEBI" id="CHEBI:18420"/>
        <label>2</label>
    </ligand>
</feature>
<feature type="binding site" evidence="1">
    <location>
        <position position="143"/>
    </location>
    <ligand>
        <name>Mg(2+)</name>
        <dbReference type="ChEBI" id="CHEBI:18420"/>
        <label>1</label>
    </ligand>
</feature>
<accession>Q6G5Q9</accession>
<organism>
    <name type="scientific">Bartonella henselae (strain ATCC 49882 / DSM 28221 / CCUG 30454 / Houston 1)</name>
    <name type="common">Rochalimaea henselae</name>
    <dbReference type="NCBI Taxonomy" id="283166"/>
    <lineage>
        <taxon>Bacteria</taxon>
        <taxon>Pseudomonadati</taxon>
        <taxon>Pseudomonadota</taxon>
        <taxon>Alphaproteobacteria</taxon>
        <taxon>Hyphomicrobiales</taxon>
        <taxon>Bartonellaceae</taxon>
        <taxon>Bartonella</taxon>
    </lineage>
</organism>
<keyword id="KW-0963">Cytoplasm</keyword>
<keyword id="KW-0227">DNA damage</keyword>
<keyword id="KW-0233">DNA recombination</keyword>
<keyword id="KW-0234">DNA repair</keyword>
<keyword id="KW-0238">DNA-binding</keyword>
<keyword id="KW-0255">Endonuclease</keyword>
<keyword id="KW-0378">Hydrolase</keyword>
<keyword id="KW-0460">Magnesium</keyword>
<keyword id="KW-0479">Metal-binding</keyword>
<keyword id="KW-0540">Nuclease</keyword>
<name>RUVC_BARHE</name>
<dbReference type="EC" id="3.1.21.10" evidence="1"/>
<dbReference type="EMBL" id="BX897699">
    <property type="protein sequence ID" value="CAF28254.1"/>
    <property type="molecule type" value="Genomic_DNA"/>
</dbReference>
<dbReference type="RefSeq" id="WP_011181260.1">
    <property type="nucleotide sequence ID" value="NZ_LRIJ02000001.1"/>
</dbReference>
<dbReference type="SMR" id="Q6G5Q9"/>
<dbReference type="PaxDb" id="283166-BH14910"/>
<dbReference type="EnsemblBacteria" id="CAF28254">
    <property type="protein sequence ID" value="CAF28254"/>
    <property type="gene ID" value="BH14910"/>
</dbReference>
<dbReference type="GeneID" id="92986104"/>
<dbReference type="KEGG" id="bhe:BH14910"/>
<dbReference type="eggNOG" id="COG0817">
    <property type="taxonomic scope" value="Bacteria"/>
</dbReference>
<dbReference type="OrthoDB" id="9805499at2"/>
<dbReference type="Proteomes" id="UP000000421">
    <property type="component" value="Chromosome"/>
</dbReference>
<dbReference type="GO" id="GO:0005737">
    <property type="term" value="C:cytoplasm"/>
    <property type="evidence" value="ECO:0007669"/>
    <property type="project" value="UniProtKB-SubCell"/>
</dbReference>
<dbReference type="GO" id="GO:0048476">
    <property type="term" value="C:Holliday junction resolvase complex"/>
    <property type="evidence" value="ECO:0007669"/>
    <property type="project" value="UniProtKB-UniRule"/>
</dbReference>
<dbReference type="GO" id="GO:0008821">
    <property type="term" value="F:crossover junction DNA endonuclease activity"/>
    <property type="evidence" value="ECO:0007669"/>
    <property type="project" value="UniProtKB-UniRule"/>
</dbReference>
<dbReference type="GO" id="GO:0003677">
    <property type="term" value="F:DNA binding"/>
    <property type="evidence" value="ECO:0007669"/>
    <property type="project" value="UniProtKB-KW"/>
</dbReference>
<dbReference type="GO" id="GO:0000287">
    <property type="term" value="F:magnesium ion binding"/>
    <property type="evidence" value="ECO:0007669"/>
    <property type="project" value="UniProtKB-UniRule"/>
</dbReference>
<dbReference type="GO" id="GO:0006310">
    <property type="term" value="P:DNA recombination"/>
    <property type="evidence" value="ECO:0007669"/>
    <property type="project" value="UniProtKB-UniRule"/>
</dbReference>
<dbReference type="GO" id="GO:0006281">
    <property type="term" value="P:DNA repair"/>
    <property type="evidence" value="ECO:0007669"/>
    <property type="project" value="UniProtKB-UniRule"/>
</dbReference>
<dbReference type="CDD" id="cd16962">
    <property type="entry name" value="RuvC"/>
    <property type="match status" value="1"/>
</dbReference>
<dbReference type="FunFam" id="3.30.420.10:FF:000002">
    <property type="entry name" value="Crossover junction endodeoxyribonuclease RuvC"/>
    <property type="match status" value="1"/>
</dbReference>
<dbReference type="Gene3D" id="3.30.420.10">
    <property type="entry name" value="Ribonuclease H-like superfamily/Ribonuclease H"/>
    <property type="match status" value="1"/>
</dbReference>
<dbReference type="HAMAP" id="MF_00034">
    <property type="entry name" value="RuvC"/>
    <property type="match status" value="1"/>
</dbReference>
<dbReference type="InterPro" id="IPR012337">
    <property type="entry name" value="RNaseH-like_sf"/>
</dbReference>
<dbReference type="InterPro" id="IPR036397">
    <property type="entry name" value="RNaseH_sf"/>
</dbReference>
<dbReference type="InterPro" id="IPR020563">
    <property type="entry name" value="X-over_junc_endoDNase_Mg_BS"/>
</dbReference>
<dbReference type="InterPro" id="IPR002176">
    <property type="entry name" value="X-over_junc_endoDNase_RuvC"/>
</dbReference>
<dbReference type="NCBIfam" id="TIGR00228">
    <property type="entry name" value="ruvC"/>
    <property type="match status" value="1"/>
</dbReference>
<dbReference type="PANTHER" id="PTHR30194">
    <property type="entry name" value="CROSSOVER JUNCTION ENDODEOXYRIBONUCLEASE RUVC"/>
    <property type="match status" value="1"/>
</dbReference>
<dbReference type="PANTHER" id="PTHR30194:SF3">
    <property type="entry name" value="CROSSOVER JUNCTION ENDODEOXYRIBONUCLEASE RUVC"/>
    <property type="match status" value="1"/>
</dbReference>
<dbReference type="Pfam" id="PF02075">
    <property type="entry name" value="RuvC"/>
    <property type="match status" value="1"/>
</dbReference>
<dbReference type="PRINTS" id="PR00696">
    <property type="entry name" value="RSOLVASERUVC"/>
</dbReference>
<dbReference type="SUPFAM" id="SSF53098">
    <property type="entry name" value="Ribonuclease H-like"/>
    <property type="match status" value="1"/>
</dbReference>
<dbReference type="PROSITE" id="PS01321">
    <property type="entry name" value="RUVC"/>
    <property type="match status" value="1"/>
</dbReference>
<protein>
    <recommendedName>
        <fullName evidence="1">Crossover junction endodeoxyribonuclease RuvC</fullName>
        <ecNumber evidence="1">3.1.21.10</ecNumber>
    </recommendedName>
    <alternativeName>
        <fullName evidence="1">Holliday junction nuclease RuvC</fullName>
    </alternativeName>
    <alternativeName>
        <fullName evidence="1">Holliday junction resolvase RuvC</fullName>
    </alternativeName>
</protein>
<sequence>MAETIRIIGIDPGLRRTGWGVIDFSGNRLQFVAAGTLTSDARCDLASRLCQLYKGLTDILHQFMPQEAAVEHVFVNKDATATLKLGQARAIALLAPAQANLPVFEYAPNKVKKSVIGVGHGDKEQIHMMVKVLLPRAEFDSSDAADALALALCHSTHRIGASYHARIMA</sequence>
<proteinExistence type="inferred from homology"/>
<reference key="1">
    <citation type="journal article" date="2004" name="Proc. Natl. Acad. Sci. U.S.A.">
        <title>The louse-borne human pathogen Bartonella quintana is a genomic derivative of the zoonotic agent Bartonella henselae.</title>
        <authorList>
            <person name="Alsmark U.C.M."/>
            <person name="Frank A.C."/>
            <person name="Karlberg E.O."/>
            <person name="Legault B.-A."/>
            <person name="Ardell D.H."/>
            <person name="Canbaeck B."/>
            <person name="Eriksson A.-S."/>
            <person name="Naeslund A.K."/>
            <person name="Handley S.A."/>
            <person name="Huvet M."/>
            <person name="La Scola B."/>
            <person name="Holmberg M."/>
            <person name="Andersson S.G.E."/>
        </authorList>
    </citation>
    <scope>NUCLEOTIDE SEQUENCE [LARGE SCALE GENOMIC DNA]</scope>
    <source>
        <strain>ATCC 49882 / DSM 28221 / CCUG 30454 / Houston 1</strain>
    </source>
</reference>
<evidence type="ECO:0000255" key="1">
    <source>
        <dbReference type="HAMAP-Rule" id="MF_00034"/>
    </source>
</evidence>
<gene>
    <name evidence="1" type="primary">ruvC</name>
    <name type="ordered locus">BH14910</name>
</gene>
<comment type="function">
    <text evidence="1">The RuvA-RuvB-RuvC complex processes Holliday junction (HJ) DNA during genetic recombination and DNA repair. Endonuclease that resolves HJ intermediates. Cleaves cruciform DNA by making single-stranded nicks across the HJ at symmetrical positions within the homologous arms, yielding a 5'-phosphate and a 3'-hydroxyl group; requires a central core of homology in the junction. The consensus cleavage sequence is 5'-(A/T)TT(C/G)-3'. Cleavage occurs on the 3'-side of the TT dinucleotide at the point of strand exchange. HJ branch migration catalyzed by RuvA-RuvB allows RuvC to scan DNA until it finds its consensus sequence, where it cleaves and resolves the cruciform DNA.</text>
</comment>
<comment type="catalytic activity">
    <reaction evidence="1">
        <text>Endonucleolytic cleavage at a junction such as a reciprocal single-stranded crossover between two homologous DNA duplexes (Holliday junction).</text>
        <dbReference type="EC" id="3.1.21.10"/>
    </reaction>
</comment>
<comment type="cofactor">
    <cofactor evidence="1">
        <name>Mg(2+)</name>
        <dbReference type="ChEBI" id="CHEBI:18420"/>
    </cofactor>
    <text evidence="1">Binds 2 Mg(2+) ion per subunit.</text>
</comment>
<comment type="subunit">
    <text evidence="1">Homodimer which binds Holliday junction (HJ) DNA. The HJ becomes 2-fold symmetrical on binding to RuvC with unstacked arms; it has a different conformation from HJ DNA in complex with RuvA. In the full resolvosome a probable DNA-RuvA(4)-RuvB(12)-RuvC(2) complex forms which resolves the HJ.</text>
</comment>
<comment type="subcellular location">
    <subcellularLocation>
        <location evidence="1">Cytoplasm</location>
    </subcellularLocation>
</comment>
<comment type="similarity">
    <text evidence="1">Belongs to the RuvC family.</text>
</comment>